<organismHost>
    <name type="scientific">Acanthamoeba polyphaga</name>
    <name type="common">Amoeba</name>
    <dbReference type="NCBI Taxonomy" id="5757"/>
</organismHost>
<evidence type="ECO:0000250" key="1"/>
<evidence type="ECO:0000305" key="2"/>
<proteinExistence type="inferred from homology"/>
<keyword id="KW-0012">Acyltransferase</keyword>
<keyword id="KW-1185">Reference proteome</keyword>
<keyword id="KW-0808">Transferase</keyword>
<name>YR151_MIMIV</name>
<organism>
    <name type="scientific">Acanthamoeba polyphaga mimivirus</name>
    <name type="common">APMV</name>
    <dbReference type="NCBI Taxonomy" id="212035"/>
    <lineage>
        <taxon>Viruses</taxon>
        <taxon>Varidnaviria</taxon>
        <taxon>Bamfordvirae</taxon>
        <taxon>Nucleocytoviricota</taxon>
        <taxon>Megaviricetes</taxon>
        <taxon>Imitervirales</taxon>
        <taxon>Mimiviridae</taxon>
        <taxon>Megamimivirinae</taxon>
        <taxon>Mimivirus</taxon>
        <taxon>Mimivirus bradfordmassiliense</taxon>
    </lineage>
</organism>
<gene>
    <name type="ordered locus">MIMI_R151</name>
</gene>
<comment type="similarity">
    <text evidence="2">Belongs to the arylamine N-acetyltransferase family.</text>
</comment>
<reference key="1">
    <citation type="journal article" date="2004" name="Science">
        <title>The 1.2-megabase genome sequence of Mimivirus.</title>
        <authorList>
            <person name="Raoult D."/>
            <person name="Audic S."/>
            <person name="Robert C."/>
            <person name="Abergel C."/>
            <person name="Renesto P."/>
            <person name="Ogata H."/>
            <person name="La Scola B."/>
            <person name="Susan M."/>
            <person name="Claverie J.-M."/>
        </authorList>
    </citation>
    <scope>NUCLEOTIDE SEQUENCE [LARGE SCALE GENOMIC DNA]</scope>
    <source>
        <strain>Rowbotham-Bradford</strain>
    </source>
</reference>
<feature type="chain" id="PRO_0000243984" description="Uncharacterized acetyltransferase R151">
    <location>
        <begin position="1"/>
        <end position="212"/>
    </location>
</feature>
<feature type="active site" description="Acyl-thioester intermediate" evidence="1">
    <location>
        <position position="52"/>
    </location>
</feature>
<feature type="active site" evidence="1">
    <location>
        <position position="89"/>
    </location>
</feature>
<feature type="active site" evidence="1">
    <location>
        <position position="104"/>
    </location>
</feature>
<protein>
    <recommendedName>
        <fullName>Uncharacterized acetyltransferase R151</fullName>
        <ecNumber>2.3.1.-</ecNumber>
    </recommendedName>
</protein>
<sequence length="212" mass="25070">MSNLSSLKKLMVGFLSRHNFSNRDYFSGETYLRTFDHYTIIDKVYTTKYGICMELNYVFHIILTNHHIPNYLVKCHKKKSNGDFYDLFHLAIIVELDGSKYFIDVGFGEHFIEPVELNHNSITGNIKVIFNQLENTNISTYDISTNNILILRVTDEPLNNIKHIESNYQKFFHSKPEEFPLCRVLFERKFDAKTNQYIPLVPDYQYIKKANY</sequence>
<accession>Q5UPL9</accession>
<dbReference type="EC" id="2.3.1.-"/>
<dbReference type="EMBL" id="AY653733">
    <property type="protein sequence ID" value="AAV50426.1"/>
    <property type="molecule type" value="Genomic_DNA"/>
</dbReference>
<dbReference type="SMR" id="Q5UPL9"/>
<dbReference type="KEGG" id="vg:9924751"/>
<dbReference type="OrthoDB" id="32898at10239"/>
<dbReference type="Proteomes" id="UP000001134">
    <property type="component" value="Genome"/>
</dbReference>
<dbReference type="GO" id="GO:0016407">
    <property type="term" value="F:acetyltransferase activity"/>
    <property type="evidence" value="ECO:0007669"/>
    <property type="project" value="InterPro"/>
</dbReference>
<dbReference type="Gene3D" id="3.30.2140.20">
    <property type="match status" value="1"/>
</dbReference>
<dbReference type="InterPro" id="IPR001447">
    <property type="entry name" value="Arylamine_N-AcTrfase"/>
</dbReference>
<dbReference type="InterPro" id="IPR053710">
    <property type="entry name" value="Arylamine_NAT_domain_sf"/>
</dbReference>
<dbReference type="InterPro" id="IPR038765">
    <property type="entry name" value="Papain-like_cys_pep_sf"/>
</dbReference>
<dbReference type="PANTHER" id="PTHR11786:SF0">
    <property type="entry name" value="ARYLAMINE N-ACETYLTRANSFERASE 4-RELATED"/>
    <property type="match status" value="1"/>
</dbReference>
<dbReference type="PANTHER" id="PTHR11786">
    <property type="entry name" value="N-HYDROXYARYLAMINE O-ACETYLTRANSFERASE"/>
    <property type="match status" value="1"/>
</dbReference>
<dbReference type="Pfam" id="PF00797">
    <property type="entry name" value="Acetyltransf_2"/>
    <property type="match status" value="1"/>
</dbReference>
<dbReference type="SUPFAM" id="SSF54001">
    <property type="entry name" value="Cysteine proteinases"/>
    <property type="match status" value="1"/>
</dbReference>